<proteinExistence type="evidence at transcript level"/>
<reference key="1">
    <citation type="journal article" date="2013" name="Nature">
        <title>The zebrafish reference genome sequence and its relationship to the human genome.</title>
        <authorList>
            <person name="Howe K."/>
            <person name="Clark M.D."/>
            <person name="Torroja C.F."/>
            <person name="Torrance J."/>
            <person name="Berthelot C."/>
            <person name="Muffato M."/>
            <person name="Collins J.E."/>
            <person name="Humphray S."/>
            <person name="McLaren K."/>
            <person name="Matthews L."/>
            <person name="McLaren S."/>
            <person name="Sealy I."/>
            <person name="Caccamo M."/>
            <person name="Churcher C."/>
            <person name="Scott C."/>
            <person name="Barrett J.C."/>
            <person name="Koch R."/>
            <person name="Rauch G.J."/>
            <person name="White S."/>
            <person name="Chow W."/>
            <person name="Kilian B."/>
            <person name="Quintais L.T."/>
            <person name="Guerra-Assuncao J.A."/>
            <person name="Zhou Y."/>
            <person name="Gu Y."/>
            <person name="Yen J."/>
            <person name="Vogel J.H."/>
            <person name="Eyre T."/>
            <person name="Redmond S."/>
            <person name="Banerjee R."/>
            <person name="Chi J."/>
            <person name="Fu B."/>
            <person name="Langley E."/>
            <person name="Maguire S.F."/>
            <person name="Laird G.K."/>
            <person name="Lloyd D."/>
            <person name="Kenyon E."/>
            <person name="Donaldson S."/>
            <person name="Sehra H."/>
            <person name="Almeida-King J."/>
            <person name="Loveland J."/>
            <person name="Trevanion S."/>
            <person name="Jones M."/>
            <person name="Quail M."/>
            <person name="Willey D."/>
            <person name="Hunt A."/>
            <person name="Burton J."/>
            <person name="Sims S."/>
            <person name="McLay K."/>
            <person name="Plumb B."/>
            <person name="Davis J."/>
            <person name="Clee C."/>
            <person name="Oliver K."/>
            <person name="Clark R."/>
            <person name="Riddle C."/>
            <person name="Elliot D."/>
            <person name="Threadgold G."/>
            <person name="Harden G."/>
            <person name="Ware D."/>
            <person name="Begum S."/>
            <person name="Mortimore B."/>
            <person name="Kerry G."/>
            <person name="Heath P."/>
            <person name="Phillimore B."/>
            <person name="Tracey A."/>
            <person name="Corby N."/>
            <person name="Dunn M."/>
            <person name="Johnson C."/>
            <person name="Wood J."/>
            <person name="Clark S."/>
            <person name="Pelan S."/>
            <person name="Griffiths G."/>
            <person name="Smith M."/>
            <person name="Glithero R."/>
            <person name="Howden P."/>
            <person name="Barker N."/>
            <person name="Lloyd C."/>
            <person name="Stevens C."/>
            <person name="Harley J."/>
            <person name="Holt K."/>
            <person name="Panagiotidis G."/>
            <person name="Lovell J."/>
            <person name="Beasley H."/>
            <person name="Henderson C."/>
            <person name="Gordon D."/>
            <person name="Auger K."/>
            <person name="Wright D."/>
            <person name="Collins J."/>
            <person name="Raisen C."/>
            <person name="Dyer L."/>
            <person name="Leung K."/>
            <person name="Robertson L."/>
            <person name="Ambridge K."/>
            <person name="Leongamornlert D."/>
            <person name="McGuire S."/>
            <person name="Gilderthorp R."/>
            <person name="Griffiths C."/>
            <person name="Manthravadi D."/>
            <person name="Nichol S."/>
            <person name="Barker G."/>
            <person name="Whitehead S."/>
            <person name="Kay M."/>
            <person name="Brown J."/>
            <person name="Murnane C."/>
            <person name="Gray E."/>
            <person name="Humphries M."/>
            <person name="Sycamore N."/>
            <person name="Barker D."/>
            <person name="Saunders D."/>
            <person name="Wallis J."/>
            <person name="Babbage A."/>
            <person name="Hammond S."/>
            <person name="Mashreghi-Mohammadi M."/>
            <person name="Barr L."/>
            <person name="Martin S."/>
            <person name="Wray P."/>
            <person name="Ellington A."/>
            <person name="Matthews N."/>
            <person name="Ellwood M."/>
            <person name="Woodmansey R."/>
            <person name="Clark G."/>
            <person name="Cooper J."/>
            <person name="Tromans A."/>
            <person name="Grafham D."/>
            <person name="Skuce C."/>
            <person name="Pandian R."/>
            <person name="Andrews R."/>
            <person name="Harrison E."/>
            <person name="Kimberley A."/>
            <person name="Garnett J."/>
            <person name="Fosker N."/>
            <person name="Hall R."/>
            <person name="Garner P."/>
            <person name="Kelly D."/>
            <person name="Bird C."/>
            <person name="Palmer S."/>
            <person name="Gehring I."/>
            <person name="Berger A."/>
            <person name="Dooley C.M."/>
            <person name="Ersan-Urun Z."/>
            <person name="Eser C."/>
            <person name="Geiger H."/>
            <person name="Geisler M."/>
            <person name="Karotki L."/>
            <person name="Kirn A."/>
            <person name="Konantz J."/>
            <person name="Konantz M."/>
            <person name="Oberlander M."/>
            <person name="Rudolph-Geiger S."/>
            <person name="Teucke M."/>
            <person name="Lanz C."/>
            <person name="Raddatz G."/>
            <person name="Osoegawa K."/>
            <person name="Zhu B."/>
            <person name="Rapp A."/>
            <person name="Widaa S."/>
            <person name="Langford C."/>
            <person name="Yang F."/>
            <person name="Schuster S.C."/>
            <person name="Carter N.P."/>
            <person name="Harrow J."/>
            <person name="Ning Z."/>
            <person name="Herrero J."/>
            <person name="Searle S.M."/>
            <person name="Enright A."/>
            <person name="Geisler R."/>
            <person name="Plasterk R.H."/>
            <person name="Lee C."/>
            <person name="Westerfield M."/>
            <person name="de Jong P.J."/>
            <person name="Zon L.I."/>
            <person name="Postlethwait J.H."/>
            <person name="Nusslein-Volhard C."/>
            <person name="Hubbard T.J."/>
            <person name="Roest Crollius H."/>
            <person name="Rogers J."/>
            <person name="Stemple D.L."/>
        </authorList>
    </citation>
    <scope>NUCLEOTIDE SEQUENCE [LARGE SCALE GENOMIC DNA]</scope>
    <source>
        <strain>Tuebingen</strain>
    </source>
</reference>
<reference key="2">
    <citation type="submission" date="2006-12" db="EMBL/GenBank/DDBJ databases">
        <authorList>
            <consortium name="NIH - Zebrafish Gene Collection (ZGC) project"/>
        </authorList>
    </citation>
    <scope>NUCLEOTIDE SEQUENCE [LARGE SCALE MRNA]</scope>
</reference>
<name>UBP37_DANRE</name>
<accession>E7F6T8</accession>
<accession>A1L1F9</accession>
<accession>E7FBK6</accession>
<accession>F1QUQ3</accession>
<accession>Q08BR8</accession>
<sequence>MAAAVPRLTSGGAVRIRIRCGELGTTKWREGVIEIQERDNKINLLVKFNSGGAPRVFQLSHNVKSVSWFQTHGPNRMTLTLKDSCIVMMDKLNMLVAKKMKEYLETVKLGKPAVFKTNQGSASFGLVLGNRTAQNDSGLSPSDKQSAPRRSSLDSREDSTPRKPLGSPSRVTSTPARGSLSEIRSEKRKRLMNSDGDLTEDYPKENDSSSNNKAITDSSRKFLLSCKDKLKQSEENRASAPHTPAPLQPTSFYGSRTGAKDYTQTHSFLDRPSSTGSCPSAKRSLVLPNHSTPFKKVRPTLDYGGWNKPRPSVLAQPQPPLQGFSNLGNTCYMNAILQSLFSLPSFSNDLLKQGIPWKRVPINALLRRFAHLLAKKDISPPEVKKDLLRRVKNAISSTAERFSGYMQNDAHEFLSQCLDQLKEDVEKINKSWKNEPSAWDEPQSTRLADEVDTSRIYTCPVTVNMEFEVQHTITCKSCGEVVLKREQFNDLSIDLPRRRKTLPMRSIQDSLDLFFRMEEIEYSCEKCSGKAATVSHKFSRLPRVLILHLKRYSYNTQLSLNSKLGQQVLIPKYLTLLSHCTDATRSPLSLGWSAQNALSRTLKISQSVNSSTLRRASQRPESSGSVLCDSDSDEELVRKVARKHHPDDDRADELQQHHPHAAVEQSEFNGINDEEMLAAVLEMSRHDTSLCAGPDEEPSSSPDTGFGDADAHDLTQHLELLDAEKQPTDALESLDLTMDENKENQTPDGLQGELDWVQQYSLEQEREEQELQQALAQSLQEQEAREMREDDDLKRATELSLQEFNNSLPELLCSDEDSGNEDGLDMEYSEAEAEELKKNAETGELPNSFRLISVVSHIGSSSSSGHYISDVYDMKKQSWLTYNDLDVSRTQESTVQRDRDRSGYIFFYMHKDVFEELSELEKAGVNTDGGRTVLQPL</sequence>
<protein>
    <recommendedName>
        <fullName>Ubiquitin carboxyl-terminal hydrolase 37</fullName>
        <ecNumber>3.4.19.12</ecNumber>
    </recommendedName>
    <alternativeName>
        <fullName>Deubiquitinating enzyme 37</fullName>
    </alternativeName>
    <alternativeName>
        <fullName>Ubiquitin thioesterase 37</fullName>
    </alternativeName>
    <alternativeName>
        <fullName>Ubiquitin-specific-processing protease 37</fullName>
    </alternativeName>
</protein>
<comment type="function">
    <text evidence="1">Deubiquitinase that antagonizes the anaphase-promoting complex (APC/C) during G1/S transition by mediating deubiquitination of APC/C target proteins, thereby promoting S phase entry. Specifically mediates deubiquitination of 'Lys-11'-linked polyubiquitin chains, a specific ubiquitin-linkage type mediated by the APC/C complex (By similarity).</text>
</comment>
<comment type="catalytic activity">
    <reaction>
        <text>Thiol-dependent hydrolysis of ester, thioester, amide, peptide and isopeptide bonds formed by the C-terminal Gly of ubiquitin (a 76-residue protein attached to proteins as an intracellular targeting signal).</text>
        <dbReference type="EC" id="3.4.19.12"/>
    </reaction>
</comment>
<comment type="similarity">
    <text evidence="6">Belongs to the peptidase C19 family.</text>
</comment>
<keyword id="KW-0131">Cell cycle</keyword>
<keyword id="KW-0132">Cell division</keyword>
<keyword id="KW-0378">Hydrolase</keyword>
<keyword id="KW-0498">Mitosis</keyword>
<keyword id="KW-0645">Protease</keyword>
<keyword id="KW-1185">Reference proteome</keyword>
<keyword id="KW-0677">Repeat</keyword>
<keyword id="KW-0788">Thiol protease</keyword>
<keyword id="KW-0833">Ubl conjugation pathway</keyword>
<dbReference type="EC" id="3.4.19.12"/>
<dbReference type="EMBL" id="CT583711">
    <property type="status" value="NOT_ANNOTATED_CDS"/>
    <property type="molecule type" value="Genomic_DNA"/>
</dbReference>
<dbReference type="EMBL" id="BC124596">
    <property type="protein sequence ID" value="AAI24597.1"/>
    <property type="molecule type" value="mRNA"/>
</dbReference>
<dbReference type="EMBL" id="BC129040">
    <property type="protein sequence ID" value="AAI29041.1"/>
    <property type="molecule type" value="mRNA"/>
</dbReference>
<dbReference type="RefSeq" id="NP_001070811.1">
    <property type="nucleotide sequence ID" value="NM_001077343.1"/>
</dbReference>
<dbReference type="SMR" id="E7F6T8"/>
<dbReference type="FunCoup" id="E7F6T8">
    <property type="interactions" value="910"/>
</dbReference>
<dbReference type="STRING" id="7955.ENSDARP00000110966"/>
<dbReference type="MEROPS" id="C19.046"/>
<dbReference type="PaxDb" id="7955-ENSDARP00000108006"/>
<dbReference type="PeptideAtlas" id="E7F6T8"/>
<dbReference type="GeneID" id="768201"/>
<dbReference type="KEGG" id="dre:768201"/>
<dbReference type="AGR" id="ZFIN:ZDB-GENE-061013-802"/>
<dbReference type="CTD" id="57695"/>
<dbReference type="ZFIN" id="ZDB-GENE-061013-802">
    <property type="gene designation" value="usp37"/>
</dbReference>
<dbReference type="eggNOG" id="KOG1868">
    <property type="taxonomic scope" value="Eukaryota"/>
</dbReference>
<dbReference type="InParanoid" id="E7F6T8"/>
<dbReference type="OrthoDB" id="289038at2759"/>
<dbReference type="PhylomeDB" id="E7F6T8"/>
<dbReference type="Reactome" id="R-DRE-5689880">
    <property type="pathway name" value="Ub-specific processing proteases"/>
</dbReference>
<dbReference type="PRO" id="PR:E7F6T8"/>
<dbReference type="Proteomes" id="UP000000437">
    <property type="component" value="Chromosome 9"/>
</dbReference>
<dbReference type="GO" id="GO:0005829">
    <property type="term" value="C:cytosol"/>
    <property type="evidence" value="ECO:0000318"/>
    <property type="project" value="GO_Central"/>
</dbReference>
<dbReference type="GO" id="GO:0005634">
    <property type="term" value="C:nucleus"/>
    <property type="evidence" value="ECO:0000318"/>
    <property type="project" value="GO_Central"/>
</dbReference>
<dbReference type="GO" id="GO:0004843">
    <property type="term" value="F:cysteine-type deubiquitinase activity"/>
    <property type="evidence" value="ECO:0000250"/>
    <property type="project" value="UniProtKB"/>
</dbReference>
<dbReference type="GO" id="GO:0004197">
    <property type="term" value="F:cysteine-type endopeptidase activity"/>
    <property type="evidence" value="ECO:0000250"/>
    <property type="project" value="UniProtKB"/>
</dbReference>
<dbReference type="GO" id="GO:0051301">
    <property type="term" value="P:cell division"/>
    <property type="evidence" value="ECO:0007669"/>
    <property type="project" value="UniProtKB-KW"/>
</dbReference>
<dbReference type="GO" id="GO:0021551">
    <property type="term" value="P:central nervous system morphogenesis"/>
    <property type="evidence" value="ECO:0000315"/>
    <property type="project" value="ZFIN"/>
</dbReference>
<dbReference type="GO" id="GO:1904888">
    <property type="term" value="P:cranial skeletal system development"/>
    <property type="evidence" value="ECO:0000315"/>
    <property type="project" value="ZFIN"/>
</dbReference>
<dbReference type="GO" id="GO:0000082">
    <property type="term" value="P:G1/S transition of mitotic cell cycle"/>
    <property type="evidence" value="ECO:0000250"/>
    <property type="project" value="UniProtKB"/>
</dbReference>
<dbReference type="GO" id="GO:0035871">
    <property type="term" value="P:protein K11-linked deubiquitination"/>
    <property type="evidence" value="ECO:0000250"/>
    <property type="project" value="UniProtKB"/>
</dbReference>
<dbReference type="GO" id="GO:0071108">
    <property type="term" value="P:protein K48-linked deubiquitination"/>
    <property type="evidence" value="ECO:0000250"/>
    <property type="project" value="UniProtKB"/>
</dbReference>
<dbReference type="GO" id="GO:0006508">
    <property type="term" value="P:proteolysis"/>
    <property type="evidence" value="ECO:0007669"/>
    <property type="project" value="UniProtKB-KW"/>
</dbReference>
<dbReference type="GO" id="GO:0031647">
    <property type="term" value="P:regulation of protein stability"/>
    <property type="evidence" value="ECO:0000318"/>
    <property type="project" value="GO_Central"/>
</dbReference>
<dbReference type="CDD" id="cd02257">
    <property type="entry name" value="Peptidase_C19"/>
    <property type="match status" value="1"/>
</dbReference>
<dbReference type="CDD" id="cd13312">
    <property type="entry name" value="PH_USP37_like"/>
    <property type="match status" value="1"/>
</dbReference>
<dbReference type="FunFam" id="2.30.29.180:FF:000001">
    <property type="entry name" value="Ubiquitin carboxyl-terminal hydrolase 37"/>
    <property type="match status" value="1"/>
</dbReference>
<dbReference type="FunFam" id="3.90.70.10:FF:000040">
    <property type="entry name" value="Ubiquitin carboxyl-terminal hydrolase 37"/>
    <property type="match status" value="1"/>
</dbReference>
<dbReference type="FunFam" id="3.90.70.10:FF:000066">
    <property type="entry name" value="Ubiquitin carboxyl-terminal hydrolase 37"/>
    <property type="match status" value="1"/>
</dbReference>
<dbReference type="Gene3D" id="3.90.70.10">
    <property type="entry name" value="Cysteine proteinases"/>
    <property type="match status" value="2"/>
</dbReference>
<dbReference type="Gene3D" id="2.30.29.180">
    <property type="entry name" value="Ubiquitin carboxyl-terminal hydrolase 26/29/37, pleckstrin homology-like domain"/>
    <property type="match status" value="1"/>
</dbReference>
<dbReference type="InterPro" id="IPR038765">
    <property type="entry name" value="Papain-like_cys_pep_sf"/>
</dbReference>
<dbReference type="InterPro" id="IPR050164">
    <property type="entry name" value="Peptidase_C19"/>
</dbReference>
<dbReference type="InterPro" id="IPR001394">
    <property type="entry name" value="Peptidase_C19_UCH"/>
</dbReference>
<dbReference type="InterPro" id="IPR003903">
    <property type="entry name" value="UIM_dom"/>
</dbReference>
<dbReference type="InterPro" id="IPR032069">
    <property type="entry name" value="USP37-like_PH"/>
</dbReference>
<dbReference type="InterPro" id="IPR038093">
    <property type="entry name" value="USP37-like_PH_sf"/>
</dbReference>
<dbReference type="InterPro" id="IPR018200">
    <property type="entry name" value="USP_CS"/>
</dbReference>
<dbReference type="InterPro" id="IPR028889">
    <property type="entry name" value="USP_dom"/>
</dbReference>
<dbReference type="PANTHER" id="PTHR24006">
    <property type="entry name" value="UBIQUITIN CARBOXYL-TERMINAL HYDROLASE"/>
    <property type="match status" value="1"/>
</dbReference>
<dbReference type="PANTHER" id="PTHR24006:SF915">
    <property type="entry name" value="UBIQUITIN CARBOXYL-TERMINAL HYDROLASE-RELATED"/>
    <property type="match status" value="1"/>
</dbReference>
<dbReference type="Pfam" id="PF00443">
    <property type="entry name" value="UCH"/>
    <property type="match status" value="1"/>
</dbReference>
<dbReference type="Pfam" id="PF16674">
    <property type="entry name" value="UCH_N"/>
    <property type="match status" value="1"/>
</dbReference>
<dbReference type="Pfam" id="PF02809">
    <property type="entry name" value="UIM"/>
    <property type="match status" value="3"/>
</dbReference>
<dbReference type="SMART" id="SM00726">
    <property type="entry name" value="UIM"/>
    <property type="match status" value="3"/>
</dbReference>
<dbReference type="SUPFAM" id="SSF54001">
    <property type="entry name" value="Cysteine proteinases"/>
    <property type="match status" value="1"/>
</dbReference>
<dbReference type="PROSITE" id="PS50330">
    <property type="entry name" value="UIM"/>
    <property type="match status" value="2"/>
</dbReference>
<dbReference type="PROSITE" id="PS00972">
    <property type="entry name" value="USP_1"/>
    <property type="match status" value="1"/>
</dbReference>
<dbReference type="PROSITE" id="PS00973">
    <property type="entry name" value="USP_2"/>
    <property type="match status" value="1"/>
</dbReference>
<dbReference type="PROSITE" id="PS50235">
    <property type="entry name" value="USP_3"/>
    <property type="match status" value="1"/>
</dbReference>
<gene>
    <name type="primary">usp37</name>
    <name type="ORF">zgc:152882</name>
    <name type="ORF">zgc:153999</name>
</gene>
<evidence type="ECO:0000250" key="1"/>
<evidence type="ECO:0000255" key="2">
    <source>
        <dbReference type="PROSITE-ProRule" id="PRU00213"/>
    </source>
</evidence>
<evidence type="ECO:0000255" key="3">
    <source>
        <dbReference type="PROSITE-ProRule" id="PRU10092"/>
    </source>
</evidence>
<evidence type="ECO:0000255" key="4">
    <source>
        <dbReference type="PROSITE-ProRule" id="PRU10093"/>
    </source>
</evidence>
<evidence type="ECO:0000256" key="5">
    <source>
        <dbReference type="SAM" id="MobiDB-lite"/>
    </source>
</evidence>
<evidence type="ECO:0000305" key="6"/>
<feature type="chain" id="PRO_0000412648" description="Ubiquitin carboxyl-terminal hydrolase 37">
    <location>
        <begin position="1"/>
        <end position="937"/>
    </location>
</feature>
<feature type="domain" description="USP">
    <location>
        <begin position="322"/>
        <end position="911"/>
    </location>
</feature>
<feature type="domain" description="UIM 1" evidence="2">
    <location>
        <begin position="672"/>
        <end position="691"/>
    </location>
</feature>
<feature type="domain" description="UIM 2" evidence="2">
    <location>
        <begin position="766"/>
        <end position="785"/>
    </location>
</feature>
<feature type="domain" description="UIM 3" evidence="2">
    <location>
        <begin position="788"/>
        <end position="807"/>
    </location>
</feature>
<feature type="region of interest" description="Disordered" evidence="5">
    <location>
        <begin position="132"/>
        <end position="216"/>
    </location>
</feature>
<feature type="region of interest" description="Disordered" evidence="5">
    <location>
        <begin position="232"/>
        <end position="258"/>
    </location>
</feature>
<feature type="region of interest" description="Disordered" evidence="5">
    <location>
        <begin position="609"/>
        <end position="632"/>
    </location>
</feature>
<feature type="region of interest" description="Disordered" evidence="5">
    <location>
        <begin position="688"/>
        <end position="710"/>
    </location>
</feature>
<feature type="short sequence motif" description="KEN box 1" evidence="1">
    <location>
        <begin position="38"/>
        <end position="40"/>
    </location>
</feature>
<feature type="short sequence motif" description="D-box 1" evidence="1">
    <location>
        <begin position="76"/>
        <end position="84"/>
    </location>
</feature>
<feature type="short sequence motif" description="D-box 2" evidence="1">
    <location>
        <begin position="101"/>
        <end position="110"/>
    </location>
</feature>
<feature type="short sequence motif" description="D-box 3" evidence="1">
    <location>
        <begin position="162"/>
        <end position="170"/>
    </location>
</feature>
<feature type="short sequence motif" description="KEN box 2" evidence="1">
    <location>
        <begin position="204"/>
        <end position="206"/>
    </location>
</feature>
<feature type="short sequence motif" description="KEN box 3" evidence="1">
    <location>
        <begin position="742"/>
        <end position="744"/>
    </location>
</feature>
<feature type="compositionally biased region" description="Polar residues" evidence="5">
    <location>
        <begin position="132"/>
        <end position="149"/>
    </location>
</feature>
<feature type="compositionally biased region" description="Basic and acidic residues" evidence="5">
    <location>
        <begin position="151"/>
        <end position="161"/>
    </location>
</feature>
<feature type="compositionally biased region" description="Polar residues" evidence="5">
    <location>
        <begin position="609"/>
        <end position="625"/>
    </location>
</feature>
<feature type="active site" description="Nucleophile" evidence="3 4">
    <location>
        <position position="331"/>
    </location>
</feature>
<feature type="active site" description="Proton acceptor" evidence="3 4">
    <location>
        <position position="866"/>
    </location>
</feature>
<feature type="sequence conflict" description="In Ref. 2; AAI24597." evidence="6" ref="2">
    <original>L</original>
    <variation>Q</variation>
    <location>
        <position position="79"/>
    </location>
</feature>
<feature type="sequence conflict" description="In Ref. 2; AAI24597/AAI29041." evidence="6" ref="2">
    <original>T</original>
    <variation>N</variation>
    <location>
        <position position="106"/>
    </location>
</feature>
<feature type="sequence conflict" description="In Ref. 2; AAI24597/AAI29041." evidence="6" ref="2">
    <original>S</original>
    <variation>N</variation>
    <location>
        <position position="155"/>
    </location>
</feature>
<feature type="sequence conflict" description="In Ref. 2; AAI24597/AAI29041." evidence="6" ref="2">
    <original>L</original>
    <variation>F</variation>
    <location>
        <position position="180"/>
    </location>
</feature>
<feature type="sequence conflict" description="In Ref. 2; AAI24597/AAI29041." evidence="6" ref="2">
    <original>T</original>
    <variation>M</variation>
    <location>
        <position position="445"/>
    </location>
</feature>
<feature type="sequence conflict" description="In Ref. 2; AAI24597/AAI29041." evidence="6" ref="2">
    <original>A</original>
    <variation>V</variation>
    <location>
        <position position="531"/>
    </location>
</feature>
<feature type="sequence conflict" description="In Ref. 2; AAI24597/AAI29041." evidence="6" ref="2">
    <original>R</original>
    <variation>K</variation>
    <location>
        <position position="615"/>
    </location>
</feature>
<feature type="sequence conflict" description="In Ref. 2; AAI24597." evidence="6" ref="2">
    <original>E</original>
    <variation>V</variation>
    <location>
        <position position="634"/>
    </location>
</feature>
<feature type="sequence conflict" description="In Ref. 2; AAI24597." evidence="6" ref="2">
    <original>E</original>
    <variation>EQ</variation>
    <location>
        <position position="653"/>
    </location>
</feature>
<feature type="sequence conflict" description="In Ref. 2; AAI29041/AAI24597." evidence="6" ref="2">
    <original>LQQ</original>
    <variation>HHH</variation>
    <location>
        <begin position="654"/>
        <end position="656"/>
    </location>
</feature>
<feature type="sequence conflict" description="In Ref. 2; AAI24597." evidence="6" ref="2">
    <original>L</original>
    <variation>P</variation>
    <location>
        <position position="734"/>
    </location>
</feature>
<organism>
    <name type="scientific">Danio rerio</name>
    <name type="common">Zebrafish</name>
    <name type="synonym">Brachydanio rerio</name>
    <dbReference type="NCBI Taxonomy" id="7955"/>
    <lineage>
        <taxon>Eukaryota</taxon>
        <taxon>Metazoa</taxon>
        <taxon>Chordata</taxon>
        <taxon>Craniata</taxon>
        <taxon>Vertebrata</taxon>
        <taxon>Euteleostomi</taxon>
        <taxon>Actinopterygii</taxon>
        <taxon>Neopterygii</taxon>
        <taxon>Teleostei</taxon>
        <taxon>Ostariophysi</taxon>
        <taxon>Cypriniformes</taxon>
        <taxon>Danionidae</taxon>
        <taxon>Danioninae</taxon>
        <taxon>Danio</taxon>
    </lineage>
</organism>